<keyword id="KW-0903">Direct protein sequencing</keyword>
<keyword id="KW-1015">Disulfide bond</keyword>
<keyword id="KW-0928">Hypersensitive response elicitation</keyword>
<keyword id="KW-0964">Secreted</keyword>
<name>ELIA_PHYSY</name>
<accession>P85436</accession>
<protein>
    <recommendedName>
        <fullName>Alpha-elicitin syringicin</fullName>
    </recommendedName>
</protein>
<organism>
    <name type="scientific">Phytophthora syringae</name>
    <name type="common">Fruit rot disease fungus</name>
    <dbReference type="NCBI Taxonomy" id="67594"/>
    <lineage>
        <taxon>Eukaryota</taxon>
        <taxon>Sar</taxon>
        <taxon>Stramenopiles</taxon>
        <taxon>Oomycota</taxon>
        <taxon>Peronosporales</taxon>
        <taxon>Peronosporaceae</taxon>
        <taxon>Phytophthora</taxon>
    </lineage>
</organism>
<reference evidence="4" key="1">
    <citation type="journal article" date="2001" name="Phytochemistry">
        <title>Syringicin, a new alpha-elicitin from an isolate of Phytophthora syringae, pathogenic to citrus fruit.</title>
        <authorList>
            <person name="Capasso R."/>
            <person name="Cristinzio G."/>
            <person name="Di Maro A."/>
            <person name="Ferranti P."/>
            <person name="Parente A."/>
        </authorList>
    </citation>
    <scope>PROTEIN SEQUENCE</scope>
    <scope>FUNCTION</scope>
    <scope>SUBCELLULAR LOCATION</scope>
    <scope>MASS SPECTROMETRY</scope>
</reference>
<dbReference type="SMR" id="P85436"/>
<dbReference type="GO" id="GO:0005576">
    <property type="term" value="C:extracellular region"/>
    <property type="evidence" value="ECO:0007669"/>
    <property type="project" value="UniProtKB-SubCell"/>
</dbReference>
<dbReference type="GO" id="GO:0052040">
    <property type="term" value="P:symbiont-mediated perturbation of host programmed cell death"/>
    <property type="evidence" value="ECO:0007669"/>
    <property type="project" value="UniProtKB-KW"/>
</dbReference>
<dbReference type="Gene3D" id="1.10.239.10">
    <property type="entry name" value="Elicitin domain"/>
    <property type="match status" value="1"/>
</dbReference>
<dbReference type="InterPro" id="IPR002200">
    <property type="entry name" value="Elicitin"/>
</dbReference>
<dbReference type="InterPro" id="IPR036470">
    <property type="entry name" value="Elicitin_sf"/>
</dbReference>
<dbReference type="Pfam" id="PF00964">
    <property type="entry name" value="Elicitin"/>
    <property type="match status" value="1"/>
</dbReference>
<dbReference type="PRINTS" id="PR00948">
    <property type="entry name" value="ELICITIN"/>
</dbReference>
<dbReference type="SMART" id="SM01187">
    <property type="entry name" value="Elicitin"/>
    <property type="match status" value="1"/>
</dbReference>
<dbReference type="SUPFAM" id="SSF48647">
    <property type="entry name" value="Fungal elicitin"/>
    <property type="match status" value="1"/>
</dbReference>
<feature type="chain" id="PRO_0000320155" description="Alpha-elicitin syringicin">
    <location>
        <begin position="1"/>
        <end position="98"/>
    </location>
</feature>
<feature type="disulfide bond" evidence="1">
    <location>
        <begin position="3"/>
        <end position="71"/>
    </location>
</feature>
<feature type="disulfide bond" evidence="1">
    <location>
        <begin position="27"/>
        <end position="56"/>
    </location>
</feature>
<feature type="disulfide bond" evidence="1">
    <location>
        <begin position="51"/>
        <end position="95"/>
    </location>
</feature>
<comment type="function">
    <text evidence="3 4">Induces local and distal defense responses (incompatible hypersensitive reaction) in plants from the solanaceae and cruciferae families. Elicits leaf necrosis and causes the accumulation of pathogenesis-related proteins. Might interact with the lipidic molecules of the plasma membrane.</text>
</comment>
<comment type="subcellular location">
    <subcellularLocation>
        <location evidence="3">Secreted</location>
    </subcellularLocation>
</comment>
<comment type="mass spectrometry" mass="10194.6" error="0.2" method="Electrospray" evidence="3"/>
<comment type="similarity">
    <text evidence="2">Belongs to the elicitin family.</text>
</comment>
<proteinExistence type="evidence at protein level"/>
<sequence length="98" mass="10201">TTCTTTQQTAAYVALVSILSDSSFNQCATDSGYSMLTATALPTTAQYKLMCASTACKTMITKIVSLNAPDCELTVPTSGLVLNVYSYANGFSSTCASL</sequence>
<evidence type="ECO:0000250" key="1">
    <source>
        <dbReference type="UniProtKB" id="P15571"/>
    </source>
</evidence>
<evidence type="ECO:0000255" key="2"/>
<evidence type="ECO:0000269" key="3">
    <source>
    </source>
</evidence>
<evidence type="ECO:0000305" key="4"/>